<gene>
    <name type="primary">SCPL49</name>
    <name type="ordered locus">At3g10410</name>
    <name type="ORF">F13M14.32</name>
</gene>
<proteinExistence type="evidence at transcript level"/>
<protein>
    <recommendedName>
        <fullName>Serine carboxypeptidase-like 49</fullName>
        <ecNumber>3.4.16.-</ecNumber>
    </recommendedName>
</protein>
<reference key="1">
    <citation type="journal article" date="1992" name="Plant Physiol.">
        <title>Isolation and characterization of a gene encoding a carboxypeptidase Y-like protein from Arabidopsis thaliana.</title>
        <authorList>
            <person name="Bradley D."/>
        </authorList>
    </citation>
    <scope>NUCLEOTIDE SEQUENCE [GENOMIC DNA]</scope>
    <source>
        <strain>cv. Landsberg erecta</strain>
    </source>
</reference>
<reference key="2">
    <citation type="journal article" date="2000" name="Nature">
        <title>Sequence and analysis of chromosome 3 of the plant Arabidopsis thaliana.</title>
        <authorList>
            <person name="Salanoubat M."/>
            <person name="Lemcke K."/>
            <person name="Rieger M."/>
            <person name="Ansorge W."/>
            <person name="Unseld M."/>
            <person name="Fartmann B."/>
            <person name="Valle G."/>
            <person name="Bloecker H."/>
            <person name="Perez-Alonso M."/>
            <person name="Obermaier B."/>
            <person name="Delseny M."/>
            <person name="Boutry M."/>
            <person name="Grivell L.A."/>
            <person name="Mache R."/>
            <person name="Puigdomenech P."/>
            <person name="De Simone V."/>
            <person name="Choisne N."/>
            <person name="Artiguenave F."/>
            <person name="Robert C."/>
            <person name="Brottier P."/>
            <person name="Wincker P."/>
            <person name="Cattolico L."/>
            <person name="Weissenbach J."/>
            <person name="Saurin W."/>
            <person name="Quetier F."/>
            <person name="Schaefer M."/>
            <person name="Mueller-Auer S."/>
            <person name="Gabel C."/>
            <person name="Fuchs M."/>
            <person name="Benes V."/>
            <person name="Wurmbach E."/>
            <person name="Drzonek H."/>
            <person name="Erfle H."/>
            <person name="Jordan N."/>
            <person name="Bangert S."/>
            <person name="Wiedelmann R."/>
            <person name="Kranz H."/>
            <person name="Voss H."/>
            <person name="Holland R."/>
            <person name="Brandt P."/>
            <person name="Nyakatura G."/>
            <person name="Vezzi A."/>
            <person name="D'Angelo M."/>
            <person name="Pallavicini A."/>
            <person name="Toppo S."/>
            <person name="Simionati B."/>
            <person name="Conrad A."/>
            <person name="Hornischer K."/>
            <person name="Kauer G."/>
            <person name="Loehnert T.-H."/>
            <person name="Nordsiek G."/>
            <person name="Reichelt J."/>
            <person name="Scharfe M."/>
            <person name="Schoen O."/>
            <person name="Bargues M."/>
            <person name="Terol J."/>
            <person name="Climent J."/>
            <person name="Navarro P."/>
            <person name="Collado C."/>
            <person name="Perez-Perez A."/>
            <person name="Ottenwaelder B."/>
            <person name="Duchemin D."/>
            <person name="Cooke R."/>
            <person name="Laudie M."/>
            <person name="Berger-Llauro C."/>
            <person name="Purnelle B."/>
            <person name="Masuy D."/>
            <person name="de Haan M."/>
            <person name="Maarse A.C."/>
            <person name="Alcaraz J.-P."/>
            <person name="Cottet A."/>
            <person name="Casacuberta E."/>
            <person name="Monfort A."/>
            <person name="Argiriou A."/>
            <person name="Flores M."/>
            <person name="Liguori R."/>
            <person name="Vitale D."/>
            <person name="Mannhaupt G."/>
            <person name="Haase D."/>
            <person name="Schoof H."/>
            <person name="Rudd S."/>
            <person name="Zaccaria P."/>
            <person name="Mewes H.-W."/>
            <person name="Mayer K.F.X."/>
            <person name="Kaul S."/>
            <person name="Town C.D."/>
            <person name="Koo H.L."/>
            <person name="Tallon L.J."/>
            <person name="Jenkins J."/>
            <person name="Rooney T."/>
            <person name="Rizzo M."/>
            <person name="Walts A."/>
            <person name="Utterback T."/>
            <person name="Fujii C.Y."/>
            <person name="Shea T.P."/>
            <person name="Creasy T.H."/>
            <person name="Haas B."/>
            <person name="Maiti R."/>
            <person name="Wu D."/>
            <person name="Peterson J."/>
            <person name="Van Aken S."/>
            <person name="Pai G."/>
            <person name="Militscher J."/>
            <person name="Sellers P."/>
            <person name="Gill J.E."/>
            <person name="Feldblyum T.V."/>
            <person name="Preuss D."/>
            <person name="Lin X."/>
            <person name="Nierman W.C."/>
            <person name="Salzberg S.L."/>
            <person name="White O."/>
            <person name="Venter J.C."/>
            <person name="Fraser C.M."/>
            <person name="Kaneko T."/>
            <person name="Nakamura Y."/>
            <person name="Sato S."/>
            <person name="Kato T."/>
            <person name="Asamizu E."/>
            <person name="Sasamoto S."/>
            <person name="Kimura T."/>
            <person name="Idesawa K."/>
            <person name="Kawashima K."/>
            <person name="Kishida Y."/>
            <person name="Kiyokawa C."/>
            <person name="Kohara M."/>
            <person name="Matsumoto M."/>
            <person name="Matsuno A."/>
            <person name="Muraki A."/>
            <person name="Nakayama S."/>
            <person name="Nakazaki N."/>
            <person name="Shinpo S."/>
            <person name="Takeuchi C."/>
            <person name="Wada T."/>
            <person name="Watanabe A."/>
            <person name="Yamada M."/>
            <person name="Yasuda M."/>
            <person name="Tabata S."/>
        </authorList>
    </citation>
    <scope>NUCLEOTIDE SEQUENCE [LARGE SCALE GENOMIC DNA]</scope>
    <source>
        <strain>cv. Columbia</strain>
    </source>
</reference>
<reference key="3">
    <citation type="journal article" date="2017" name="Plant J.">
        <title>Araport11: a complete reannotation of the Arabidopsis thaliana reference genome.</title>
        <authorList>
            <person name="Cheng C.Y."/>
            <person name="Krishnakumar V."/>
            <person name="Chan A.P."/>
            <person name="Thibaud-Nissen F."/>
            <person name="Schobel S."/>
            <person name="Town C.D."/>
        </authorList>
    </citation>
    <scope>GENOME REANNOTATION</scope>
    <source>
        <strain>cv. Columbia</strain>
    </source>
</reference>
<reference key="4">
    <citation type="journal article" date="2003" name="Science">
        <title>Empirical analysis of transcriptional activity in the Arabidopsis genome.</title>
        <authorList>
            <person name="Yamada K."/>
            <person name="Lim J."/>
            <person name="Dale J.M."/>
            <person name="Chen H."/>
            <person name="Shinn P."/>
            <person name="Palm C.J."/>
            <person name="Southwick A.M."/>
            <person name="Wu H.C."/>
            <person name="Kim C.J."/>
            <person name="Nguyen M."/>
            <person name="Pham P.K."/>
            <person name="Cheuk R.F."/>
            <person name="Karlin-Newmann G."/>
            <person name="Liu S.X."/>
            <person name="Lam B."/>
            <person name="Sakano H."/>
            <person name="Wu T."/>
            <person name="Yu G."/>
            <person name="Miranda M."/>
            <person name="Quach H.L."/>
            <person name="Tripp M."/>
            <person name="Chang C.H."/>
            <person name="Lee J.M."/>
            <person name="Toriumi M.J."/>
            <person name="Chan M.M."/>
            <person name="Tang C.C."/>
            <person name="Onodera C.S."/>
            <person name="Deng J.M."/>
            <person name="Akiyama K."/>
            <person name="Ansari Y."/>
            <person name="Arakawa T."/>
            <person name="Banh J."/>
            <person name="Banno F."/>
            <person name="Bowser L."/>
            <person name="Brooks S.Y."/>
            <person name="Carninci P."/>
            <person name="Chao Q."/>
            <person name="Choy N."/>
            <person name="Enju A."/>
            <person name="Goldsmith A.D."/>
            <person name="Gurjal M."/>
            <person name="Hansen N.F."/>
            <person name="Hayashizaki Y."/>
            <person name="Johnson-Hopson C."/>
            <person name="Hsuan V.W."/>
            <person name="Iida K."/>
            <person name="Karnes M."/>
            <person name="Khan S."/>
            <person name="Koesema E."/>
            <person name="Ishida J."/>
            <person name="Jiang P.X."/>
            <person name="Jones T."/>
            <person name="Kawai J."/>
            <person name="Kamiya A."/>
            <person name="Meyers C."/>
            <person name="Nakajima M."/>
            <person name="Narusaka M."/>
            <person name="Seki M."/>
            <person name="Sakurai T."/>
            <person name="Satou M."/>
            <person name="Tamse R."/>
            <person name="Vaysberg M."/>
            <person name="Wallender E.K."/>
            <person name="Wong C."/>
            <person name="Yamamura Y."/>
            <person name="Yuan S."/>
            <person name="Shinozaki K."/>
            <person name="Davis R.W."/>
            <person name="Theologis A."/>
            <person name="Ecker J.R."/>
        </authorList>
    </citation>
    <scope>NUCLEOTIDE SEQUENCE [LARGE SCALE MRNA]</scope>
    <source>
        <strain>cv. Columbia</strain>
    </source>
</reference>
<reference key="5">
    <citation type="journal article" date="1996" name="Plant J.">
        <title>Further progress towards a catalogue of all Arabidopsis genes: analysis of a set of 5000 non-redundant ESTs.</title>
        <authorList>
            <person name="Cooke R."/>
            <person name="Raynal M."/>
            <person name="Laudie M."/>
            <person name="Grellet F."/>
            <person name="Delseny M."/>
            <person name="Morris P.-C."/>
            <person name="Guerrier D."/>
            <person name="Giraudat J."/>
            <person name="Quigley F."/>
            <person name="Clabault G."/>
            <person name="Li Y.-F."/>
            <person name="Mache R."/>
            <person name="Krivitzky M."/>
            <person name="Gy I.J.-J."/>
            <person name="Kreis M."/>
            <person name="Lecharny A."/>
            <person name="Parmentier Y."/>
            <person name="Marbach J."/>
            <person name="Fleck J."/>
            <person name="Clement B."/>
            <person name="Philipps G."/>
            <person name="Herve C."/>
            <person name="Bardet C."/>
            <person name="Tremousaygue D."/>
            <person name="Lescure B."/>
            <person name="Lacomme C."/>
            <person name="Roby D."/>
            <person name="Jourjon M.-F."/>
            <person name="Chabrier P."/>
            <person name="Charpenteau J.-L."/>
            <person name="Desprez T."/>
            <person name="Amselem J."/>
            <person name="Chiapello H."/>
            <person name="Hoefte H."/>
        </authorList>
    </citation>
    <scope>NUCLEOTIDE SEQUENCE [LARGE SCALE MRNA] OF 252-372 AND 455-516</scope>
    <source>
        <strain>cv. Columbia</strain>
        <tissue>Seedling</tissue>
    </source>
</reference>
<reference key="6">
    <citation type="journal article" date="2005" name="Plant Physiol.">
        <title>An expression and bioinformatics analysis of the Arabidopsis serine carboxypeptidase-like gene family.</title>
        <authorList>
            <person name="Fraser C.M."/>
            <person name="Rider L.W."/>
            <person name="Chapple C."/>
        </authorList>
    </citation>
    <scope>GENE FAMILY</scope>
    <scope>TISSUE SPECIFICITY</scope>
    <scope>NOMENCLATURE</scope>
</reference>
<organism>
    <name type="scientific">Arabidopsis thaliana</name>
    <name type="common">Mouse-ear cress</name>
    <dbReference type="NCBI Taxonomy" id="3702"/>
    <lineage>
        <taxon>Eukaryota</taxon>
        <taxon>Viridiplantae</taxon>
        <taxon>Streptophyta</taxon>
        <taxon>Embryophyta</taxon>
        <taxon>Tracheophyta</taxon>
        <taxon>Spermatophyta</taxon>
        <taxon>Magnoliopsida</taxon>
        <taxon>eudicotyledons</taxon>
        <taxon>Gunneridae</taxon>
        <taxon>Pentapetalae</taxon>
        <taxon>rosids</taxon>
        <taxon>malvids</taxon>
        <taxon>Brassicales</taxon>
        <taxon>Brassicaceae</taxon>
        <taxon>Camelineae</taxon>
        <taxon>Arabidopsis</taxon>
    </lineage>
</organism>
<evidence type="ECO:0000250" key="1"/>
<evidence type="ECO:0000255" key="2"/>
<evidence type="ECO:0000269" key="3">
    <source>
    </source>
</evidence>
<evidence type="ECO:0000305" key="4"/>
<accession>P32826</accession>
<accession>Q42107</accession>
<accession>Q9CAE5</accession>
<feature type="signal peptide" evidence="2">
    <location>
        <begin position="1"/>
        <end position="22"/>
    </location>
</feature>
<feature type="propeptide" id="PRO_0000004333" evidence="2">
    <location>
        <begin position="23"/>
        <end position="82"/>
    </location>
</feature>
<feature type="chain" id="PRO_0000004334" description="Serine carboxypeptidase-like 49">
    <location>
        <begin position="83"/>
        <end position="516"/>
    </location>
</feature>
<feature type="active site" evidence="1">
    <location>
        <position position="229"/>
    </location>
</feature>
<feature type="active site" evidence="1">
    <location>
        <position position="417"/>
    </location>
</feature>
<feature type="active site" evidence="1">
    <location>
        <position position="474"/>
    </location>
</feature>
<feature type="binding site" evidence="1">
    <location>
        <position position="420"/>
    </location>
    <ligand>
        <name>substrate</name>
    </ligand>
</feature>
<feature type="glycosylation site" description="N-linked (GlcNAc...) asparagine" evidence="2">
    <location>
        <position position="157"/>
    </location>
</feature>
<feature type="disulfide bond" evidence="1">
    <location>
        <begin position="139"/>
        <end position="379"/>
    </location>
</feature>
<feature type="disulfide bond" evidence="1">
    <location>
        <begin position="307"/>
        <end position="322"/>
    </location>
</feature>
<feature type="disulfide bond" evidence="1">
    <location>
        <begin position="345"/>
        <end position="350"/>
    </location>
</feature>
<sequence>MEKLTFLSLLLHFVVFIASTIPSSSFLLNDRTFERSNLPSTRAEKLIRELNLFPQQDLNVIDVADLPLTAAEGPGIVERKFVFPNILADGGPTVDDLGHHAGYYKLPKSRGASMFYFFFESRNKKDAPVVIWLTGGPGCSSELAVFYENGPFKITSNMSLAWNEYGWDQVSNLLYVDQPVGTGFSYTTDKSDIRHDETGVSNDLYDFLQAFFAEHPKLAKNDFYITGESYAGHYIPAFASRVHKGNKANEGVHINLKGFAIGNGLTDPALQYPAYPDYALEMGLITQKEHDRLEKIVPLCELSIKLCGTDGTTSCLASYLVCNSLFSGVMSHAGGVNYYDIRKKCVGSLCYDFSNMEKFLNLQSVRKSLGVGDIDFVSCSTSVYQAMLVDWMRNLEVGIPTLLEDGISLLVYAGEYDLICNWLGNSRWVNAMEWSGKTNFGAAKEVPFIVDGKEAGLLKTYEQLSFLKVRDAGHMVPMDQPKAALKMLKRWMENSLIEDATVTVAAQGGEELVAQM</sequence>
<dbReference type="EC" id="3.4.16.-"/>
<dbReference type="EMBL" id="M81130">
    <property type="protein sequence ID" value="AAB04606.1"/>
    <property type="status" value="ALT_SEQ"/>
    <property type="molecule type" value="Genomic_DNA"/>
</dbReference>
<dbReference type="EMBL" id="AC011560">
    <property type="protein sequence ID" value="AAG51389.1"/>
    <property type="molecule type" value="Genomic_DNA"/>
</dbReference>
<dbReference type="EMBL" id="CP002686">
    <property type="protein sequence ID" value="AEE74902.1"/>
    <property type="molecule type" value="Genomic_DNA"/>
</dbReference>
<dbReference type="EMBL" id="AY091767">
    <property type="protein sequence ID" value="AAM10315.1"/>
    <property type="molecule type" value="mRNA"/>
</dbReference>
<dbReference type="EMBL" id="AY149954">
    <property type="protein sequence ID" value="AAN31108.1"/>
    <property type="molecule type" value="mRNA"/>
</dbReference>
<dbReference type="EMBL" id="Z25955">
    <property type="protein sequence ID" value="CAA81115.1"/>
    <property type="molecule type" value="mRNA"/>
</dbReference>
<dbReference type="EMBL" id="Z26528">
    <property type="protein sequence ID" value="CAA81299.1"/>
    <property type="molecule type" value="mRNA"/>
</dbReference>
<dbReference type="RefSeq" id="NP_187652.1">
    <property type="nucleotide sequence ID" value="NM_111876.5"/>
</dbReference>
<dbReference type="SMR" id="P32826"/>
<dbReference type="BioGRID" id="5539">
    <property type="interactions" value="3"/>
</dbReference>
<dbReference type="FunCoup" id="P32826">
    <property type="interactions" value="968"/>
</dbReference>
<dbReference type="IntAct" id="P32826">
    <property type="interactions" value="2"/>
</dbReference>
<dbReference type="STRING" id="3702.P32826"/>
<dbReference type="ESTHER" id="arath-SCP49">
    <property type="family name" value="Carboxypeptidase_S10"/>
</dbReference>
<dbReference type="MEROPS" id="S10.A45"/>
<dbReference type="GlyCosmos" id="P32826">
    <property type="glycosylation" value="1 site, No reported glycans"/>
</dbReference>
<dbReference type="GlyGen" id="P32826">
    <property type="glycosylation" value="1 site"/>
</dbReference>
<dbReference type="SwissPalm" id="P32826"/>
<dbReference type="PaxDb" id="3702-AT3G10410.1"/>
<dbReference type="ProteomicsDB" id="232705"/>
<dbReference type="EnsemblPlants" id="AT3G10410.1">
    <property type="protein sequence ID" value="AT3G10410.1"/>
    <property type="gene ID" value="AT3G10410"/>
</dbReference>
<dbReference type="GeneID" id="820205"/>
<dbReference type="Gramene" id="AT3G10410.1">
    <property type="protein sequence ID" value="AT3G10410.1"/>
    <property type="gene ID" value="AT3G10410"/>
</dbReference>
<dbReference type="KEGG" id="ath:AT3G10410"/>
<dbReference type="Araport" id="AT3G10410"/>
<dbReference type="TAIR" id="AT3G10410">
    <property type="gene designation" value="SCPL49"/>
</dbReference>
<dbReference type="eggNOG" id="KOG1282">
    <property type="taxonomic scope" value="Eukaryota"/>
</dbReference>
<dbReference type="HOGENOM" id="CLU_008523_10_1_1"/>
<dbReference type="InParanoid" id="P32826"/>
<dbReference type="OMA" id="GDWMKPF"/>
<dbReference type="OrthoDB" id="443318at2759"/>
<dbReference type="PhylomeDB" id="P32826"/>
<dbReference type="PRO" id="PR:P32826"/>
<dbReference type="Proteomes" id="UP000006548">
    <property type="component" value="Chromosome 3"/>
</dbReference>
<dbReference type="ExpressionAtlas" id="P32826">
    <property type="expression patterns" value="baseline and differential"/>
</dbReference>
<dbReference type="GO" id="GO:0005576">
    <property type="term" value="C:extracellular region"/>
    <property type="evidence" value="ECO:0007669"/>
    <property type="project" value="UniProtKB-SubCell"/>
</dbReference>
<dbReference type="GO" id="GO:0000325">
    <property type="term" value="C:plant-type vacuole"/>
    <property type="evidence" value="ECO:0007005"/>
    <property type="project" value="TAIR"/>
</dbReference>
<dbReference type="GO" id="GO:0005773">
    <property type="term" value="C:vacuole"/>
    <property type="evidence" value="ECO:0000314"/>
    <property type="project" value="TAIR"/>
</dbReference>
<dbReference type="GO" id="GO:0004185">
    <property type="term" value="F:serine-type carboxypeptidase activity"/>
    <property type="evidence" value="ECO:0007669"/>
    <property type="project" value="InterPro"/>
</dbReference>
<dbReference type="GO" id="GO:0006508">
    <property type="term" value="P:proteolysis"/>
    <property type="evidence" value="ECO:0007669"/>
    <property type="project" value="UniProtKB-KW"/>
</dbReference>
<dbReference type="FunFam" id="3.40.50.1820:FF:000060">
    <property type="entry name" value="Carboxypeptidase"/>
    <property type="match status" value="1"/>
</dbReference>
<dbReference type="Gene3D" id="3.40.50.1820">
    <property type="entry name" value="alpha/beta hydrolase"/>
    <property type="match status" value="1"/>
</dbReference>
<dbReference type="InterPro" id="IPR029058">
    <property type="entry name" value="AB_hydrolase_fold"/>
</dbReference>
<dbReference type="InterPro" id="IPR001563">
    <property type="entry name" value="Peptidase_S10"/>
</dbReference>
<dbReference type="InterPro" id="IPR033124">
    <property type="entry name" value="Ser_caboxypep_his_AS"/>
</dbReference>
<dbReference type="InterPro" id="IPR018202">
    <property type="entry name" value="Ser_caboxypep_ser_AS"/>
</dbReference>
<dbReference type="PANTHER" id="PTHR11802:SF446">
    <property type="entry name" value="SERINE CARBOXYPEPTIDASE-LIKE 49"/>
    <property type="match status" value="1"/>
</dbReference>
<dbReference type="PANTHER" id="PTHR11802">
    <property type="entry name" value="SERINE PROTEASE FAMILY S10 SERINE CARBOXYPEPTIDASE"/>
    <property type="match status" value="1"/>
</dbReference>
<dbReference type="Pfam" id="PF00450">
    <property type="entry name" value="Peptidase_S10"/>
    <property type="match status" value="1"/>
</dbReference>
<dbReference type="PRINTS" id="PR00724">
    <property type="entry name" value="CRBOXYPTASEC"/>
</dbReference>
<dbReference type="SUPFAM" id="SSF53474">
    <property type="entry name" value="alpha/beta-Hydrolases"/>
    <property type="match status" value="1"/>
</dbReference>
<dbReference type="PROSITE" id="PS00560">
    <property type="entry name" value="CARBOXYPEPT_SER_HIS"/>
    <property type="match status" value="1"/>
</dbReference>
<dbReference type="PROSITE" id="PS00131">
    <property type="entry name" value="CARBOXYPEPT_SER_SER"/>
    <property type="match status" value="1"/>
</dbReference>
<name>SCP49_ARATH</name>
<comment type="function">
    <text evidence="1">Probable carboxypeptidase.</text>
</comment>
<comment type="subcellular location">
    <subcellularLocation>
        <location evidence="4">Secreted</location>
    </subcellularLocation>
</comment>
<comment type="tissue specificity">
    <text evidence="3">Expressed in roots, senescent leaves and flowers.</text>
</comment>
<comment type="similarity">
    <text evidence="4">Belongs to the peptidase S10 family.</text>
</comment>
<comment type="sequence caution" evidence="4">
    <conflict type="frameshift">
        <sequence resource="EMBL-CDS" id="AAB04606"/>
    </conflict>
</comment>
<keyword id="KW-0121">Carboxypeptidase</keyword>
<keyword id="KW-1015">Disulfide bond</keyword>
<keyword id="KW-0325">Glycoprotein</keyword>
<keyword id="KW-0378">Hydrolase</keyword>
<keyword id="KW-0645">Protease</keyword>
<keyword id="KW-1185">Reference proteome</keyword>
<keyword id="KW-0964">Secreted</keyword>
<keyword id="KW-0732">Signal</keyword>
<keyword id="KW-0865">Zymogen</keyword>